<dbReference type="EC" id="4.2.1.19" evidence="1"/>
<dbReference type="EMBL" id="CP001177">
    <property type="protein sequence ID" value="ACJ79764.1"/>
    <property type="molecule type" value="Genomic_DNA"/>
</dbReference>
<dbReference type="SMR" id="B7HKD1"/>
<dbReference type="KEGG" id="bcr:BCAH187_A1566"/>
<dbReference type="HOGENOM" id="CLU_044308_3_0_9"/>
<dbReference type="UniPathway" id="UPA00031">
    <property type="reaction ID" value="UER00011"/>
</dbReference>
<dbReference type="Proteomes" id="UP000002214">
    <property type="component" value="Chromosome"/>
</dbReference>
<dbReference type="GO" id="GO:0005737">
    <property type="term" value="C:cytoplasm"/>
    <property type="evidence" value="ECO:0007669"/>
    <property type="project" value="UniProtKB-SubCell"/>
</dbReference>
<dbReference type="GO" id="GO:0004424">
    <property type="term" value="F:imidazoleglycerol-phosphate dehydratase activity"/>
    <property type="evidence" value="ECO:0007669"/>
    <property type="project" value="UniProtKB-UniRule"/>
</dbReference>
<dbReference type="GO" id="GO:0000105">
    <property type="term" value="P:L-histidine biosynthetic process"/>
    <property type="evidence" value="ECO:0007669"/>
    <property type="project" value="UniProtKB-UniRule"/>
</dbReference>
<dbReference type="CDD" id="cd07914">
    <property type="entry name" value="IGPD"/>
    <property type="match status" value="1"/>
</dbReference>
<dbReference type="FunFam" id="3.30.230.40:FF:000001">
    <property type="entry name" value="Imidazoleglycerol-phosphate dehydratase HisB"/>
    <property type="match status" value="1"/>
</dbReference>
<dbReference type="FunFam" id="3.30.230.40:FF:000003">
    <property type="entry name" value="Imidazoleglycerol-phosphate dehydratase HisB"/>
    <property type="match status" value="1"/>
</dbReference>
<dbReference type="Gene3D" id="3.30.230.40">
    <property type="entry name" value="Imidazole glycerol phosphate dehydratase, domain 1"/>
    <property type="match status" value="2"/>
</dbReference>
<dbReference type="HAMAP" id="MF_00076">
    <property type="entry name" value="HisB"/>
    <property type="match status" value="1"/>
</dbReference>
<dbReference type="InterPro" id="IPR038494">
    <property type="entry name" value="IGPD_sf"/>
</dbReference>
<dbReference type="InterPro" id="IPR000807">
    <property type="entry name" value="ImidazoleglycerolP_deHydtase"/>
</dbReference>
<dbReference type="InterPro" id="IPR020565">
    <property type="entry name" value="ImidazoleglycerP_deHydtase_CS"/>
</dbReference>
<dbReference type="InterPro" id="IPR020568">
    <property type="entry name" value="Ribosomal_Su5_D2-typ_SF"/>
</dbReference>
<dbReference type="NCBIfam" id="NF002107">
    <property type="entry name" value="PRK00951.1-2"/>
    <property type="match status" value="1"/>
</dbReference>
<dbReference type="NCBIfam" id="NF002111">
    <property type="entry name" value="PRK00951.2-1"/>
    <property type="match status" value="1"/>
</dbReference>
<dbReference type="NCBIfam" id="NF002114">
    <property type="entry name" value="PRK00951.2-4"/>
    <property type="match status" value="1"/>
</dbReference>
<dbReference type="PANTHER" id="PTHR23133:SF2">
    <property type="entry name" value="IMIDAZOLEGLYCEROL-PHOSPHATE DEHYDRATASE"/>
    <property type="match status" value="1"/>
</dbReference>
<dbReference type="PANTHER" id="PTHR23133">
    <property type="entry name" value="IMIDAZOLEGLYCEROL-PHOSPHATE DEHYDRATASE HIS7"/>
    <property type="match status" value="1"/>
</dbReference>
<dbReference type="Pfam" id="PF00475">
    <property type="entry name" value="IGPD"/>
    <property type="match status" value="1"/>
</dbReference>
<dbReference type="SUPFAM" id="SSF54211">
    <property type="entry name" value="Ribosomal protein S5 domain 2-like"/>
    <property type="match status" value="2"/>
</dbReference>
<dbReference type="PROSITE" id="PS00954">
    <property type="entry name" value="IGP_DEHYDRATASE_1"/>
    <property type="match status" value="1"/>
</dbReference>
<dbReference type="PROSITE" id="PS00955">
    <property type="entry name" value="IGP_DEHYDRATASE_2"/>
    <property type="match status" value="1"/>
</dbReference>
<name>HIS7_BACC7</name>
<sequence>MRESSQIRETTETKIKLSLQLDDGKNVSVRTGVGFFDHMLTLFARHGRFGLQVEAEGDVFVDAHHTVEDVGIVLGNCLKEALHSKEGINRYGSAYVPMDESLGFVAIDISGRSYIVFQGELTNPKLGDFDTELTEEFFRAVAHAANITLHARILYGSNTHHKIEALFKAFGRALREAVERNANITGVNSTKGML</sequence>
<comment type="catalytic activity">
    <reaction evidence="1">
        <text>D-erythro-1-(imidazol-4-yl)glycerol 3-phosphate = 3-(imidazol-4-yl)-2-oxopropyl phosphate + H2O</text>
        <dbReference type="Rhea" id="RHEA:11040"/>
        <dbReference type="ChEBI" id="CHEBI:15377"/>
        <dbReference type="ChEBI" id="CHEBI:57766"/>
        <dbReference type="ChEBI" id="CHEBI:58278"/>
        <dbReference type="EC" id="4.2.1.19"/>
    </reaction>
</comment>
<comment type="pathway">
    <text evidence="1">Amino-acid biosynthesis; L-histidine biosynthesis; L-histidine from 5-phospho-alpha-D-ribose 1-diphosphate: step 6/9.</text>
</comment>
<comment type="subcellular location">
    <subcellularLocation>
        <location evidence="1">Cytoplasm</location>
    </subcellularLocation>
</comment>
<comment type="similarity">
    <text evidence="1">Belongs to the imidazoleglycerol-phosphate dehydratase family.</text>
</comment>
<keyword id="KW-0028">Amino-acid biosynthesis</keyword>
<keyword id="KW-0963">Cytoplasm</keyword>
<keyword id="KW-0368">Histidine biosynthesis</keyword>
<keyword id="KW-0456">Lyase</keyword>
<organism>
    <name type="scientific">Bacillus cereus (strain AH187)</name>
    <dbReference type="NCBI Taxonomy" id="405534"/>
    <lineage>
        <taxon>Bacteria</taxon>
        <taxon>Bacillati</taxon>
        <taxon>Bacillota</taxon>
        <taxon>Bacilli</taxon>
        <taxon>Bacillales</taxon>
        <taxon>Bacillaceae</taxon>
        <taxon>Bacillus</taxon>
        <taxon>Bacillus cereus group</taxon>
    </lineage>
</organism>
<proteinExistence type="inferred from homology"/>
<accession>B7HKD1</accession>
<evidence type="ECO:0000255" key="1">
    <source>
        <dbReference type="HAMAP-Rule" id="MF_00076"/>
    </source>
</evidence>
<reference key="1">
    <citation type="submission" date="2008-10" db="EMBL/GenBank/DDBJ databases">
        <title>Genome sequence of Bacillus cereus AH187.</title>
        <authorList>
            <person name="Dodson R.J."/>
            <person name="Durkin A.S."/>
            <person name="Rosovitz M.J."/>
            <person name="Rasko D.A."/>
            <person name="Kolsto A.B."/>
            <person name="Okstad O.A."/>
            <person name="Ravel J."/>
            <person name="Sutton G."/>
        </authorList>
    </citation>
    <scope>NUCLEOTIDE SEQUENCE [LARGE SCALE GENOMIC DNA]</scope>
    <source>
        <strain>AH187</strain>
    </source>
</reference>
<gene>
    <name evidence="1" type="primary">hisB</name>
    <name type="ordered locus">BCAH187_A1566</name>
</gene>
<protein>
    <recommendedName>
        <fullName evidence="1">Imidazoleglycerol-phosphate dehydratase</fullName>
        <shortName evidence="1">IGPD</shortName>
        <ecNumber evidence="1">4.2.1.19</ecNumber>
    </recommendedName>
</protein>
<feature type="chain" id="PRO_1000117080" description="Imidazoleglycerol-phosphate dehydratase">
    <location>
        <begin position="1"/>
        <end position="194"/>
    </location>
</feature>